<organism>
    <name type="scientific">Bos taurus</name>
    <name type="common">Bovine</name>
    <dbReference type="NCBI Taxonomy" id="9913"/>
    <lineage>
        <taxon>Eukaryota</taxon>
        <taxon>Metazoa</taxon>
        <taxon>Chordata</taxon>
        <taxon>Craniata</taxon>
        <taxon>Vertebrata</taxon>
        <taxon>Euteleostomi</taxon>
        <taxon>Mammalia</taxon>
        <taxon>Eutheria</taxon>
        <taxon>Laurasiatheria</taxon>
        <taxon>Artiodactyla</taxon>
        <taxon>Ruminantia</taxon>
        <taxon>Pecora</taxon>
        <taxon>Bovidae</taxon>
        <taxon>Bovinae</taxon>
        <taxon>Bos</taxon>
    </lineage>
</organism>
<reference key="1">
    <citation type="journal article" date="2005" name="BMC Genomics">
        <title>Characterization of 954 bovine full-CDS cDNA sequences.</title>
        <authorList>
            <person name="Harhay G.P."/>
            <person name="Sonstegard T.S."/>
            <person name="Keele J.W."/>
            <person name="Heaton M.P."/>
            <person name="Clawson M.L."/>
            <person name="Snelling W.M."/>
            <person name="Wiedmann R.T."/>
            <person name="Van Tassell C.P."/>
            <person name="Smith T.P.L."/>
        </authorList>
    </citation>
    <scope>NUCLEOTIDE SEQUENCE [LARGE SCALE MRNA]</scope>
</reference>
<gene>
    <name type="primary">BHLHE40</name>
    <name type="synonym">BHLHB2</name>
</gene>
<feature type="chain" id="PRO_0000354686" description="Class E basic helix-loop-helix protein 40">
    <location>
        <begin position="1"/>
        <end position="412"/>
    </location>
</feature>
<feature type="domain" description="bHLH" evidence="5">
    <location>
        <begin position="52"/>
        <end position="107"/>
    </location>
</feature>
<feature type="domain" description="Orange" evidence="4">
    <location>
        <begin position="142"/>
        <end position="175"/>
    </location>
</feature>
<feature type="region of interest" description="Essential for interaction with BMAL1, E-box binding and repressor activity against the CLOCK-BMAL1 heterodimer" evidence="1">
    <location>
        <begin position="1"/>
        <end position="139"/>
    </location>
</feature>
<feature type="region of interest" description="Disordered" evidence="6">
    <location>
        <begin position="1"/>
        <end position="21"/>
    </location>
</feature>
<feature type="region of interest" description="Necessary for interaction with RXRA and repressor activity against RXRA" evidence="1">
    <location>
        <begin position="75"/>
        <end position="79"/>
    </location>
</feature>
<feature type="region of interest" description="Disordered" evidence="6">
    <location>
        <begin position="182"/>
        <end position="256"/>
    </location>
</feature>
<feature type="region of interest" description="Disordered" evidence="6">
    <location>
        <begin position="279"/>
        <end position="298"/>
    </location>
</feature>
<feature type="modified residue" description="Phosphoserine" evidence="2">
    <location>
        <position position="235"/>
    </location>
</feature>
<feature type="modified residue" description="Phosphoserine" evidence="3">
    <location>
        <position position="383"/>
    </location>
</feature>
<feature type="cross-link" description="Glycyl lysine isopeptide (Lys-Gly) (interchain with G-Cter in SUMO1, SUMO2 and SUMO3)" evidence="1">
    <location>
        <position position="159"/>
    </location>
</feature>
<feature type="cross-link" description="Glycyl lysine isopeptide (Lys-Gly) (interchain with G-Cter in SUMO2)" evidence="2">
    <location>
        <position position="167"/>
    </location>
</feature>
<feature type="cross-link" description="Glycyl lysine isopeptide (Lys-Gly) (interchain with G-Cter in SUMO1); alternate" evidence="2">
    <location>
        <position position="279"/>
    </location>
</feature>
<feature type="cross-link" description="Glycyl lysine isopeptide (Lys-Gly) (interchain with G-Cter in SUMO1, SUMO2 and SUMO3); alternate" evidence="1">
    <location>
        <position position="279"/>
    </location>
</feature>
<feature type="cross-link" description="Glycyl lysine isopeptide (Lys-Gly) (interchain with G-Cter in SUMO2); alternate" evidence="2">
    <location>
        <position position="279"/>
    </location>
</feature>
<feature type="cross-link" description="Glycyl lysine isopeptide (Lys-Gly) (interchain with G-Cter in SUMO2)" evidence="2">
    <location>
        <position position="288"/>
    </location>
</feature>
<evidence type="ECO:0000250" key="1"/>
<evidence type="ECO:0000250" key="2">
    <source>
        <dbReference type="UniProtKB" id="O14503"/>
    </source>
</evidence>
<evidence type="ECO:0000250" key="3">
    <source>
        <dbReference type="UniProtKB" id="O35185"/>
    </source>
</evidence>
<evidence type="ECO:0000255" key="4">
    <source>
        <dbReference type="PROSITE-ProRule" id="PRU00380"/>
    </source>
</evidence>
<evidence type="ECO:0000255" key="5">
    <source>
        <dbReference type="PROSITE-ProRule" id="PRU00981"/>
    </source>
</evidence>
<evidence type="ECO:0000256" key="6">
    <source>
        <dbReference type="SAM" id="MobiDB-lite"/>
    </source>
</evidence>
<sequence length="412" mass="45621">MERIPSAQPPPTCLPKAPGLEPGDLSGMDFAHMYQVYKSRRGIKRSEDSKETYKLPHRLIEKKRRDRINECIAQLKDLLPEHLKLTTLGHLEKAVVLELTLKHVKALTNLIDQQQQKIIALQSGLQAGDLSGRNVEAGQEMFCSGFQTCAREVLQYLAKHENTRDLKSSQLVTHLHRVVSELLQGGTSRKPSDPAPKAMDFKEKPSSLAKGSEGPGKNCVPVIQRTFAHSSGEQSGSDTDTDSGYGGESEKSELRVEQPYFKSDHGRRFTMGERISAIKQESEEPPMKKSRMQLSDDEGPFTSTDLISSPFLGPHPHQPPFCLPFYLIPPSATAYLPMLEKCWYPTSVPVLYQGLNASAAALSSFMNPDKISAPLLMPQRLPSPLPTHPAIDSSALLQALKQIPPLNLETKD</sequence>
<keyword id="KW-0090">Biological rhythms</keyword>
<keyword id="KW-0963">Cytoplasm</keyword>
<keyword id="KW-0238">DNA-binding</keyword>
<keyword id="KW-1017">Isopeptide bond</keyword>
<keyword id="KW-0539">Nucleus</keyword>
<keyword id="KW-0597">Phosphoprotein</keyword>
<keyword id="KW-1185">Reference proteome</keyword>
<keyword id="KW-0678">Repressor</keyword>
<keyword id="KW-0804">Transcription</keyword>
<keyword id="KW-0805">Transcription regulation</keyword>
<keyword id="KW-0832">Ubl conjugation</keyword>
<proteinExistence type="evidence at transcript level"/>
<name>BHE40_BOVIN</name>
<accession>Q5EA15</accession>
<protein>
    <recommendedName>
        <fullName>Class E basic helix-loop-helix protein 40</fullName>
        <shortName>bHLHe40</shortName>
    </recommendedName>
    <alternativeName>
        <fullName>Class B basic helix-loop-helix protein 2</fullName>
        <shortName>bHLHb2</shortName>
    </alternativeName>
</protein>
<comment type="function">
    <text evidence="2 3">Transcriptional repressor involved in the regulation of the circadian rhythm by negatively regulating the activity of the clock genes and clock-controlled genes. Acts as the negative limb of a novel autoregulatory feedback loop (DEC loop) which differs from the one formed by the PER and CRY transcriptional repressors (PER/CRY loop). Both these loops are interlocked as it represses the expression of PER1/2 and in turn is repressed by PER1/2 and CRY1/2. Represses the activity of the circadian transcriptional activator: CLOCK-BMAL1|BMAL2 heterodimer by competing for the binding to E-box elements (5'-CACGTG-3') found within the promoters of its target genes. Negatively regulates its own expression and the expression of DBP and BHLHE41/DEC2. Acts as a corepressor of RXR and the RXR-LXR heterodimers and represses the ligand-induced RXRA and NR1H3/LXRA transactivation activity. May be involved in the regulation of chondrocyte differentiation via the cAMP pathway (By similarity). Represses the transcription of NR0B2 and attentuates the transactivation of NR0B2 by the CLOCK-BMAL1 complex (By similarity). Drives the circadian rhythm of blood pressure through transcriptional repression of ATP1B1 in the cardiovascular system (By similarity).</text>
</comment>
<comment type="subunit">
    <text evidence="1">Homodimer. Heterodimer with BHLHE41/DEC2. Interacts with TCF3/E47. Interacts with ubiquitin-conjugating enzyme UBE2I/UBC9. Interacts with HDAC1, SUMO1, RXRA and BMAL1 (By similarity).</text>
</comment>
<comment type="subcellular location">
    <subcellularLocation>
        <location evidence="2">Cytoplasm</location>
    </subcellularLocation>
    <subcellularLocation>
        <location evidence="2">Nucleus</location>
    </subcellularLocation>
    <text evidence="2">Predominantly localized in the nucleus (By similarity).</text>
</comment>
<comment type="PTM">
    <text evidence="1">Ubiquitinated; which may lead to proteasomal degradation.</text>
</comment>
<comment type="PTM">
    <text evidence="1">Sumoylation inhibits its ubiquitination and promotes its negative regulation of the CLOCK-BMAL1 heterodimer transcriptional activator activity.</text>
</comment>
<dbReference type="EMBL" id="BT020754">
    <property type="protein sequence ID" value="AAX08771.1"/>
    <property type="molecule type" value="mRNA"/>
</dbReference>
<dbReference type="RefSeq" id="NP_001020100.1">
    <property type="nucleotide sequence ID" value="NM_001024929.1"/>
</dbReference>
<dbReference type="SMR" id="Q5EA15"/>
<dbReference type="FunCoup" id="Q5EA15">
    <property type="interactions" value="398"/>
</dbReference>
<dbReference type="STRING" id="9913.ENSBTAP00000013008"/>
<dbReference type="PaxDb" id="9913-ENSBTAP00000013008"/>
<dbReference type="Ensembl" id="ENSBTAT00000013008.4">
    <property type="protein sequence ID" value="ENSBTAP00000013008.3"/>
    <property type="gene ID" value="ENSBTAG00000009863.5"/>
</dbReference>
<dbReference type="GeneID" id="506945"/>
<dbReference type="KEGG" id="bta:506945"/>
<dbReference type="CTD" id="8553"/>
<dbReference type="VEuPathDB" id="HostDB:ENSBTAG00000009863"/>
<dbReference type="VGNC" id="VGNC:26486">
    <property type="gene designation" value="BHLHE40"/>
</dbReference>
<dbReference type="eggNOG" id="KOG4304">
    <property type="taxonomic scope" value="Eukaryota"/>
</dbReference>
<dbReference type="GeneTree" id="ENSGT00940000158384"/>
<dbReference type="HOGENOM" id="CLU_049895_0_1_1"/>
<dbReference type="InParanoid" id="Q5EA15"/>
<dbReference type="OMA" id="FHVCAQE"/>
<dbReference type="OrthoDB" id="690068at2759"/>
<dbReference type="TreeFam" id="TF330859"/>
<dbReference type="Proteomes" id="UP000009136">
    <property type="component" value="Chromosome 22"/>
</dbReference>
<dbReference type="Bgee" id="ENSBTAG00000009863">
    <property type="expression patterns" value="Expressed in intramuscular adipose tissue and 107 other cell types or tissues"/>
</dbReference>
<dbReference type="GO" id="GO:0005737">
    <property type="term" value="C:cytoplasm"/>
    <property type="evidence" value="ECO:0007669"/>
    <property type="project" value="UniProtKB-SubCell"/>
</dbReference>
<dbReference type="GO" id="GO:0016604">
    <property type="term" value="C:nuclear body"/>
    <property type="evidence" value="ECO:0007669"/>
    <property type="project" value="Ensembl"/>
</dbReference>
<dbReference type="GO" id="GO:0005634">
    <property type="term" value="C:nucleus"/>
    <property type="evidence" value="ECO:0000250"/>
    <property type="project" value="UniProtKB"/>
</dbReference>
<dbReference type="GO" id="GO:0001227">
    <property type="term" value="F:DNA-binding transcription repressor activity, RNA polymerase II-specific"/>
    <property type="evidence" value="ECO:0000250"/>
    <property type="project" value="UniProtKB"/>
</dbReference>
<dbReference type="GO" id="GO:0070888">
    <property type="term" value="F:E-box binding"/>
    <property type="evidence" value="ECO:0000250"/>
    <property type="project" value="UniProtKB"/>
</dbReference>
<dbReference type="GO" id="GO:0043426">
    <property type="term" value="F:MRF binding"/>
    <property type="evidence" value="ECO:0007669"/>
    <property type="project" value="Ensembl"/>
</dbReference>
<dbReference type="GO" id="GO:0019904">
    <property type="term" value="F:protein domain specific binding"/>
    <property type="evidence" value="ECO:0007669"/>
    <property type="project" value="Ensembl"/>
</dbReference>
<dbReference type="GO" id="GO:0046982">
    <property type="term" value="F:protein heterodimerization activity"/>
    <property type="evidence" value="ECO:0007669"/>
    <property type="project" value="Ensembl"/>
</dbReference>
<dbReference type="GO" id="GO:0042803">
    <property type="term" value="F:protein homodimerization activity"/>
    <property type="evidence" value="ECO:0007669"/>
    <property type="project" value="Ensembl"/>
</dbReference>
<dbReference type="GO" id="GO:0000978">
    <property type="term" value="F:RNA polymerase II cis-regulatory region sequence-specific DNA binding"/>
    <property type="evidence" value="ECO:0000318"/>
    <property type="project" value="GO_Central"/>
</dbReference>
<dbReference type="GO" id="GO:0061629">
    <property type="term" value="F:RNA polymerase II-specific DNA-binding transcription factor binding"/>
    <property type="evidence" value="ECO:0007669"/>
    <property type="project" value="Ensembl"/>
</dbReference>
<dbReference type="GO" id="GO:0032922">
    <property type="term" value="P:circadian regulation of gene expression"/>
    <property type="evidence" value="ECO:0000250"/>
    <property type="project" value="UniProtKB"/>
</dbReference>
<dbReference type="GO" id="GO:0007623">
    <property type="term" value="P:circadian rhythm"/>
    <property type="evidence" value="ECO:0000250"/>
    <property type="project" value="UniProtKB"/>
</dbReference>
<dbReference type="GO" id="GO:0043153">
    <property type="term" value="P:entrainment of circadian clock by photoperiod"/>
    <property type="evidence" value="ECO:0007669"/>
    <property type="project" value="Ensembl"/>
</dbReference>
<dbReference type="GO" id="GO:0045892">
    <property type="term" value="P:negative regulation of DNA-templated transcription"/>
    <property type="evidence" value="ECO:0000250"/>
    <property type="project" value="UniProtKB"/>
</dbReference>
<dbReference type="GO" id="GO:0042752">
    <property type="term" value="P:regulation of circadian rhythm"/>
    <property type="evidence" value="ECO:0000250"/>
    <property type="project" value="UniProtKB"/>
</dbReference>
<dbReference type="GO" id="GO:0050767">
    <property type="term" value="P:regulation of neurogenesis"/>
    <property type="evidence" value="ECO:0000318"/>
    <property type="project" value="GO_Central"/>
</dbReference>
<dbReference type="CDD" id="cd19749">
    <property type="entry name" value="bHLH-O_DEC1"/>
    <property type="match status" value="1"/>
</dbReference>
<dbReference type="FunFam" id="4.10.280.10:FF:000020">
    <property type="entry name" value="class E basic helix-loop-helix protein 40"/>
    <property type="match status" value="1"/>
</dbReference>
<dbReference type="Gene3D" id="6.10.250.980">
    <property type="match status" value="1"/>
</dbReference>
<dbReference type="Gene3D" id="4.10.280.10">
    <property type="entry name" value="Helix-loop-helix DNA-binding domain"/>
    <property type="match status" value="1"/>
</dbReference>
<dbReference type="InterPro" id="IPR011598">
    <property type="entry name" value="bHLH_dom"/>
</dbReference>
<dbReference type="InterPro" id="IPR050370">
    <property type="entry name" value="HES_HEY"/>
</dbReference>
<dbReference type="InterPro" id="IPR036638">
    <property type="entry name" value="HLH_DNA-bd_sf"/>
</dbReference>
<dbReference type="InterPro" id="IPR003650">
    <property type="entry name" value="Orange_dom"/>
</dbReference>
<dbReference type="PANTHER" id="PTHR10985">
    <property type="entry name" value="BASIC HELIX-LOOP-HELIX TRANSCRIPTION FACTOR, HES-RELATED"/>
    <property type="match status" value="1"/>
</dbReference>
<dbReference type="Pfam" id="PF07527">
    <property type="entry name" value="Hairy_orange"/>
    <property type="match status" value="1"/>
</dbReference>
<dbReference type="Pfam" id="PF00010">
    <property type="entry name" value="HLH"/>
    <property type="match status" value="1"/>
</dbReference>
<dbReference type="SMART" id="SM00353">
    <property type="entry name" value="HLH"/>
    <property type="match status" value="1"/>
</dbReference>
<dbReference type="SMART" id="SM00511">
    <property type="entry name" value="ORANGE"/>
    <property type="match status" value="1"/>
</dbReference>
<dbReference type="SUPFAM" id="SSF47459">
    <property type="entry name" value="HLH, helix-loop-helix DNA-binding domain"/>
    <property type="match status" value="1"/>
</dbReference>
<dbReference type="SUPFAM" id="SSF158457">
    <property type="entry name" value="Orange domain-like"/>
    <property type="match status" value="1"/>
</dbReference>
<dbReference type="PROSITE" id="PS50888">
    <property type="entry name" value="BHLH"/>
    <property type="match status" value="1"/>
</dbReference>
<dbReference type="PROSITE" id="PS51054">
    <property type="entry name" value="ORANGE"/>
    <property type="match status" value="1"/>
</dbReference>